<name>WHIA_SACEN</name>
<reference key="1">
    <citation type="journal article" date="2007" name="Nat. Biotechnol.">
        <title>Complete genome sequence of the erythromycin-producing bacterium Saccharopolyspora erythraea NRRL23338.</title>
        <authorList>
            <person name="Oliynyk M."/>
            <person name="Samborskyy M."/>
            <person name="Lester J.B."/>
            <person name="Mironenko T."/>
            <person name="Scott N."/>
            <person name="Dickens S."/>
            <person name="Haydock S.F."/>
            <person name="Leadlay P.F."/>
        </authorList>
    </citation>
    <scope>NUCLEOTIDE SEQUENCE [LARGE SCALE GENOMIC DNA]</scope>
    <source>
        <strain>ATCC 11635 / DSM 40517 / JCM 4748 / NBRC 13426 / NCIMB 8594 / NRRL 2338</strain>
    </source>
</reference>
<sequence>MAMTSAVKDELSRLSVTKTCCRRSEVSSLLRFAGGLHIVAGRVVVEAELDSGSSARRLRKEIHELFGHQSDVHVITSGGLRKGTRYVVRVVKDGEGLARQTGLLDPRGRPVRGLPAHVVSGGACDSESAWRGAFLAHGSLTEPGRSSSLEVTCPGPEAALALVGAARRLGIQAKSREVRGADRVVVRDGDAIGALLTRLGAHSSVLAWEERRMRREVRATANRLANFDDANLRRSARAAVAAAARVERALELLGPTAPDHLLVAGKLRLSHRQASLEELGQLAEPPMTKDAVAGRIRRLLAMADKRARELGLPDTESAVTAEMLEA</sequence>
<keyword id="KW-0131">Cell cycle</keyword>
<keyword id="KW-0132">Cell division</keyword>
<keyword id="KW-0238">DNA-binding</keyword>
<keyword id="KW-1185">Reference proteome</keyword>
<organism>
    <name type="scientific">Saccharopolyspora erythraea (strain ATCC 11635 / DSM 40517 / JCM 4748 / NBRC 13426 / NCIMB 8594 / NRRL 2338)</name>
    <dbReference type="NCBI Taxonomy" id="405948"/>
    <lineage>
        <taxon>Bacteria</taxon>
        <taxon>Bacillati</taxon>
        <taxon>Actinomycetota</taxon>
        <taxon>Actinomycetes</taxon>
        <taxon>Pseudonocardiales</taxon>
        <taxon>Pseudonocardiaceae</taxon>
        <taxon>Saccharopolyspora</taxon>
    </lineage>
</organism>
<feature type="chain" id="PRO_0000376548" description="Probable cell division protein WhiA">
    <location>
        <begin position="1"/>
        <end position="326"/>
    </location>
</feature>
<feature type="DNA-binding region" description="H-T-H motif" evidence="1">
    <location>
        <begin position="275"/>
        <end position="308"/>
    </location>
</feature>
<proteinExistence type="inferred from homology"/>
<dbReference type="EMBL" id="AM420293">
    <property type="protein sequence ID" value="CAM01447.1"/>
    <property type="molecule type" value="Genomic_DNA"/>
</dbReference>
<dbReference type="RefSeq" id="WP_009942979.1">
    <property type="nucleotide sequence ID" value="NC_009142.1"/>
</dbReference>
<dbReference type="SMR" id="A4FBM2"/>
<dbReference type="STRING" id="405948.SACE_2141"/>
<dbReference type="KEGG" id="sen:SACE_2141"/>
<dbReference type="eggNOG" id="COG1481">
    <property type="taxonomic scope" value="Bacteria"/>
</dbReference>
<dbReference type="HOGENOM" id="CLU_053282_0_0_11"/>
<dbReference type="OrthoDB" id="5197218at2"/>
<dbReference type="Proteomes" id="UP000006728">
    <property type="component" value="Chromosome"/>
</dbReference>
<dbReference type="GO" id="GO:0003677">
    <property type="term" value="F:DNA binding"/>
    <property type="evidence" value="ECO:0007669"/>
    <property type="project" value="UniProtKB-UniRule"/>
</dbReference>
<dbReference type="GO" id="GO:0051301">
    <property type="term" value="P:cell division"/>
    <property type="evidence" value="ECO:0007669"/>
    <property type="project" value="UniProtKB-UniRule"/>
</dbReference>
<dbReference type="GO" id="GO:0043937">
    <property type="term" value="P:regulation of sporulation"/>
    <property type="evidence" value="ECO:0007669"/>
    <property type="project" value="InterPro"/>
</dbReference>
<dbReference type="FunFam" id="3.10.28.10:FF:000001">
    <property type="entry name" value="Probable cell division protein WhiA"/>
    <property type="match status" value="1"/>
</dbReference>
<dbReference type="Gene3D" id="3.10.28.10">
    <property type="entry name" value="Homing endonucleases"/>
    <property type="match status" value="1"/>
</dbReference>
<dbReference type="HAMAP" id="MF_01420">
    <property type="entry name" value="HTH_type_WhiA"/>
    <property type="match status" value="1"/>
</dbReference>
<dbReference type="InterPro" id="IPR027434">
    <property type="entry name" value="Homing_endonucl"/>
</dbReference>
<dbReference type="InterPro" id="IPR018478">
    <property type="entry name" value="Sporu_reg_WhiA_N_dom"/>
</dbReference>
<dbReference type="InterPro" id="IPR003802">
    <property type="entry name" value="Sporulation_regulator_WhiA"/>
</dbReference>
<dbReference type="InterPro" id="IPR023054">
    <property type="entry name" value="Sporulation_regulator_WhiA_C"/>
</dbReference>
<dbReference type="InterPro" id="IPR039518">
    <property type="entry name" value="WhiA_LAGLIDADG_dom"/>
</dbReference>
<dbReference type="NCBIfam" id="TIGR00647">
    <property type="entry name" value="DNA_bind_WhiA"/>
    <property type="match status" value="1"/>
</dbReference>
<dbReference type="PANTHER" id="PTHR37307">
    <property type="entry name" value="CELL DIVISION PROTEIN WHIA-RELATED"/>
    <property type="match status" value="1"/>
</dbReference>
<dbReference type="PANTHER" id="PTHR37307:SF1">
    <property type="entry name" value="CELL DIVISION PROTEIN WHIA-RELATED"/>
    <property type="match status" value="1"/>
</dbReference>
<dbReference type="Pfam" id="PF02650">
    <property type="entry name" value="HTH_WhiA"/>
    <property type="match status" value="1"/>
</dbReference>
<dbReference type="Pfam" id="PF14527">
    <property type="entry name" value="LAGLIDADG_WhiA"/>
    <property type="match status" value="1"/>
</dbReference>
<dbReference type="Pfam" id="PF10298">
    <property type="entry name" value="WhiA_N"/>
    <property type="match status" value="1"/>
</dbReference>
<comment type="function">
    <text evidence="1">Involved in cell division and chromosome segregation.</text>
</comment>
<comment type="similarity">
    <text evidence="1">Belongs to the WhiA family.</text>
</comment>
<protein>
    <recommendedName>
        <fullName evidence="1">Probable cell division protein WhiA</fullName>
    </recommendedName>
</protein>
<evidence type="ECO:0000255" key="1">
    <source>
        <dbReference type="HAMAP-Rule" id="MF_01420"/>
    </source>
</evidence>
<accession>A4FBM2</accession>
<gene>
    <name evidence="1" type="primary">whiA</name>
    <name type="ordered locus">SACE_2141</name>
</gene>